<reference key="1">
    <citation type="journal article" date="2000" name="Nature">
        <title>Sequence and analysis of chromosome 3 of the plant Arabidopsis thaliana.</title>
        <authorList>
            <person name="Salanoubat M."/>
            <person name="Lemcke K."/>
            <person name="Rieger M."/>
            <person name="Ansorge W."/>
            <person name="Unseld M."/>
            <person name="Fartmann B."/>
            <person name="Valle G."/>
            <person name="Bloecker H."/>
            <person name="Perez-Alonso M."/>
            <person name="Obermaier B."/>
            <person name="Delseny M."/>
            <person name="Boutry M."/>
            <person name="Grivell L.A."/>
            <person name="Mache R."/>
            <person name="Puigdomenech P."/>
            <person name="De Simone V."/>
            <person name="Choisne N."/>
            <person name="Artiguenave F."/>
            <person name="Robert C."/>
            <person name="Brottier P."/>
            <person name="Wincker P."/>
            <person name="Cattolico L."/>
            <person name="Weissenbach J."/>
            <person name="Saurin W."/>
            <person name="Quetier F."/>
            <person name="Schaefer M."/>
            <person name="Mueller-Auer S."/>
            <person name="Gabel C."/>
            <person name="Fuchs M."/>
            <person name="Benes V."/>
            <person name="Wurmbach E."/>
            <person name="Drzonek H."/>
            <person name="Erfle H."/>
            <person name="Jordan N."/>
            <person name="Bangert S."/>
            <person name="Wiedelmann R."/>
            <person name="Kranz H."/>
            <person name="Voss H."/>
            <person name="Holland R."/>
            <person name="Brandt P."/>
            <person name="Nyakatura G."/>
            <person name="Vezzi A."/>
            <person name="D'Angelo M."/>
            <person name="Pallavicini A."/>
            <person name="Toppo S."/>
            <person name="Simionati B."/>
            <person name="Conrad A."/>
            <person name="Hornischer K."/>
            <person name="Kauer G."/>
            <person name="Loehnert T.-H."/>
            <person name="Nordsiek G."/>
            <person name="Reichelt J."/>
            <person name="Scharfe M."/>
            <person name="Schoen O."/>
            <person name="Bargues M."/>
            <person name="Terol J."/>
            <person name="Climent J."/>
            <person name="Navarro P."/>
            <person name="Collado C."/>
            <person name="Perez-Perez A."/>
            <person name="Ottenwaelder B."/>
            <person name="Duchemin D."/>
            <person name="Cooke R."/>
            <person name="Laudie M."/>
            <person name="Berger-Llauro C."/>
            <person name="Purnelle B."/>
            <person name="Masuy D."/>
            <person name="de Haan M."/>
            <person name="Maarse A.C."/>
            <person name="Alcaraz J.-P."/>
            <person name="Cottet A."/>
            <person name="Casacuberta E."/>
            <person name="Monfort A."/>
            <person name="Argiriou A."/>
            <person name="Flores M."/>
            <person name="Liguori R."/>
            <person name="Vitale D."/>
            <person name="Mannhaupt G."/>
            <person name="Haase D."/>
            <person name="Schoof H."/>
            <person name="Rudd S."/>
            <person name="Zaccaria P."/>
            <person name="Mewes H.-W."/>
            <person name="Mayer K.F.X."/>
            <person name="Kaul S."/>
            <person name="Town C.D."/>
            <person name="Koo H.L."/>
            <person name="Tallon L.J."/>
            <person name="Jenkins J."/>
            <person name="Rooney T."/>
            <person name="Rizzo M."/>
            <person name="Walts A."/>
            <person name="Utterback T."/>
            <person name="Fujii C.Y."/>
            <person name="Shea T.P."/>
            <person name="Creasy T.H."/>
            <person name="Haas B."/>
            <person name="Maiti R."/>
            <person name="Wu D."/>
            <person name="Peterson J."/>
            <person name="Van Aken S."/>
            <person name="Pai G."/>
            <person name="Militscher J."/>
            <person name="Sellers P."/>
            <person name="Gill J.E."/>
            <person name="Feldblyum T.V."/>
            <person name="Preuss D."/>
            <person name="Lin X."/>
            <person name="Nierman W.C."/>
            <person name="Salzberg S.L."/>
            <person name="White O."/>
            <person name="Venter J.C."/>
            <person name="Fraser C.M."/>
            <person name="Kaneko T."/>
            <person name="Nakamura Y."/>
            <person name="Sato S."/>
            <person name="Kato T."/>
            <person name="Asamizu E."/>
            <person name="Sasamoto S."/>
            <person name="Kimura T."/>
            <person name="Idesawa K."/>
            <person name="Kawashima K."/>
            <person name="Kishida Y."/>
            <person name="Kiyokawa C."/>
            <person name="Kohara M."/>
            <person name="Matsumoto M."/>
            <person name="Matsuno A."/>
            <person name="Muraki A."/>
            <person name="Nakayama S."/>
            <person name="Nakazaki N."/>
            <person name="Shinpo S."/>
            <person name="Takeuchi C."/>
            <person name="Wada T."/>
            <person name="Watanabe A."/>
            <person name="Yamada M."/>
            <person name="Yasuda M."/>
            <person name="Tabata S."/>
        </authorList>
    </citation>
    <scope>NUCLEOTIDE SEQUENCE [LARGE SCALE GENOMIC DNA]</scope>
    <source>
        <strain>cv. Columbia</strain>
    </source>
</reference>
<reference key="2">
    <citation type="journal article" date="2017" name="Plant J.">
        <title>Araport11: a complete reannotation of the Arabidopsis thaliana reference genome.</title>
        <authorList>
            <person name="Cheng C.Y."/>
            <person name="Krishnakumar V."/>
            <person name="Chan A.P."/>
            <person name="Thibaud-Nissen F."/>
            <person name="Schobel S."/>
            <person name="Town C.D."/>
        </authorList>
    </citation>
    <scope>GENOME REANNOTATION</scope>
    <source>
        <strain>cv. Columbia</strain>
    </source>
</reference>
<reference key="3">
    <citation type="submission" date="2006-03" db="EMBL/GenBank/DDBJ databases">
        <title>Arabidopsis ORF clones.</title>
        <authorList>
            <person name="Shinn P."/>
            <person name="Chen H."/>
            <person name="Kim C.J."/>
            <person name="Ecker J.R."/>
        </authorList>
    </citation>
    <scope>NUCLEOTIDE SEQUENCE [LARGE SCALE MRNA]</scope>
</reference>
<reference key="4">
    <citation type="submission" date="2002-03" db="EMBL/GenBank/DDBJ databases">
        <title>Full-length cDNA from Arabidopsis thaliana.</title>
        <authorList>
            <person name="Brover V.V."/>
            <person name="Troukhan M.E."/>
            <person name="Alexandrov N.A."/>
            <person name="Lu Y.-P."/>
            <person name="Flavell R.B."/>
            <person name="Feldmann K.A."/>
        </authorList>
    </citation>
    <scope>NUCLEOTIDE SEQUENCE [LARGE SCALE MRNA]</scope>
</reference>
<reference key="5">
    <citation type="journal article" date="2000" name="Biochem. Biophys. Res. Commun.">
        <title>Animal and plant members of a gene family with similarity to alkaloid-synthesizing enzymes.</title>
        <authorList>
            <person name="Fabbri M."/>
            <person name="Delp G."/>
            <person name="Schmidt O."/>
            <person name="Theopold U."/>
        </authorList>
    </citation>
    <scope>GENE FAMILY</scope>
    <scope>NOMENCLATURE</scope>
</reference>
<reference key="6">
    <citation type="journal article" date="2009" name="Plant Biol.">
        <title>Phylogenetic and transcriptional analysis of a strictosidine synthase-like gene family in Arabidopsis thaliana reveals involvement in plant defence responses.</title>
        <authorList>
            <person name="Sohani M.M."/>
            <person name="Schenk P.M."/>
            <person name="Schultz C.J."/>
            <person name="Schmidt O."/>
        </authorList>
    </citation>
    <scope>INDUCTION BY JASMONATE AND WOUNDING</scope>
    <scope>GENE FAMILY</scope>
    <source>
        <strain>cv. Columbia</strain>
    </source>
</reference>
<reference key="7">
    <citation type="journal article" date="2009" name="Plant Physiol.">
        <title>Large-scale Arabidopsis phosphoproteome profiling reveals novel chloroplast kinase substrates and phosphorylation networks.</title>
        <authorList>
            <person name="Reiland S."/>
            <person name="Messerli G."/>
            <person name="Baerenfaller K."/>
            <person name="Gerrits B."/>
            <person name="Endler A."/>
            <person name="Grossmann J."/>
            <person name="Gruissem W."/>
            <person name="Baginsky S."/>
        </authorList>
    </citation>
    <scope>PHOSPHORYLATION [LARGE SCALE ANALYSIS] AT TYR-303</scope>
    <scope>IDENTIFICATION BY MASS SPECTROMETRY [LARGE SCALE ANALYSIS]</scope>
</reference>
<proteinExistence type="evidence at protein level"/>
<name>SSL4_ARATH</name>
<gene>
    <name evidence="5" type="primary">SSL4</name>
    <name evidence="7" type="ordered locus">At3g51420</name>
    <name evidence="8" type="ORF">F26O13.60</name>
</gene>
<organism evidence="9">
    <name type="scientific">Arabidopsis thaliana</name>
    <name type="common">Mouse-ear cress</name>
    <dbReference type="NCBI Taxonomy" id="3702"/>
    <lineage>
        <taxon>Eukaryota</taxon>
        <taxon>Viridiplantae</taxon>
        <taxon>Streptophyta</taxon>
        <taxon>Embryophyta</taxon>
        <taxon>Tracheophyta</taxon>
        <taxon>Spermatophyta</taxon>
        <taxon>Magnoliopsida</taxon>
        <taxon>eudicotyledons</taxon>
        <taxon>Gunneridae</taxon>
        <taxon>Pentapetalae</taxon>
        <taxon>rosids</taxon>
        <taxon>malvids</taxon>
        <taxon>Brassicales</taxon>
        <taxon>Brassicaceae</taxon>
        <taxon>Camelineae</taxon>
        <taxon>Arabidopsis</taxon>
    </lineage>
</organism>
<comment type="subcellular location">
    <subcellularLocation>
        <location evidence="1">Vacuole</location>
    </subcellularLocation>
</comment>
<comment type="induction">
    <text evidence="4">First induced but later repressed transiently by jasmonic acid (MJ). Slight induction after wounding, both in local and systemic tissues.</text>
</comment>
<comment type="similarity">
    <text evidence="6">Belongs to the strictosidine synthase family.</text>
</comment>
<dbReference type="EMBL" id="AL133452">
    <property type="protein sequence ID" value="CAB63006.1"/>
    <property type="molecule type" value="Genomic_DNA"/>
</dbReference>
<dbReference type="EMBL" id="CP002686">
    <property type="protein sequence ID" value="AEE78790.1"/>
    <property type="molecule type" value="Genomic_DNA"/>
</dbReference>
<dbReference type="EMBL" id="BT024894">
    <property type="protein sequence ID" value="ABD85165.1"/>
    <property type="molecule type" value="mRNA"/>
</dbReference>
<dbReference type="EMBL" id="AY087809">
    <property type="protein sequence ID" value="AAM65345.1"/>
    <property type="molecule type" value="mRNA"/>
</dbReference>
<dbReference type="PIR" id="T45773">
    <property type="entry name" value="T45773"/>
</dbReference>
<dbReference type="RefSeq" id="NP_190710.1">
    <property type="nucleotide sequence ID" value="NM_115001.3"/>
</dbReference>
<dbReference type="SMR" id="Q9SD07"/>
<dbReference type="FunCoup" id="Q9SD07">
    <property type="interactions" value="674"/>
</dbReference>
<dbReference type="STRING" id="3702.Q9SD07"/>
<dbReference type="GlyCosmos" id="Q9SD07">
    <property type="glycosylation" value="1 site, No reported glycans"/>
</dbReference>
<dbReference type="GlyGen" id="Q9SD07">
    <property type="glycosylation" value="1 site"/>
</dbReference>
<dbReference type="iPTMnet" id="Q9SD07"/>
<dbReference type="PaxDb" id="3702-AT3G51420.1"/>
<dbReference type="ProteomicsDB" id="245207"/>
<dbReference type="EnsemblPlants" id="AT3G51420.1">
    <property type="protein sequence ID" value="AT3G51420.1"/>
    <property type="gene ID" value="AT3G51420"/>
</dbReference>
<dbReference type="GeneID" id="824305"/>
<dbReference type="Gramene" id="AT3G51420.1">
    <property type="protein sequence ID" value="AT3G51420.1"/>
    <property type="gene ID" value="AT3G51420"/>
</dbReference>
<dbReference type="KEGG" id="ath:AT3G51420"/>
<dbReference type="Araport" id="AT3G51420"/>
<dbReference type="TAIR" id="AT3G51420">
    <property type="gene designation" value="SSL4"/>
</dbReference>
<dbReference type="eggNOG" id="KOG1520">
    <property type="taxonomic scope" value="Eukaryota"/>
</dbReference>
<dbReference type="HOGENOM" id="CLU_023267_0_2_1"/>
<dbReference type="InParanoid" id="Q9SD07"/>
<dbReference type="OMA" id="ISTHITM"/>
<dbReference type="OrthoDB" id="5307922at2759"/>
<dbReference type="PhylomeDB" id="Q9SD07"/>
<dbReference type="BRENDA" id="4.3.3.2">
    <property type="organism ID" value="399"/>
</dbReference>
<dbReference type="PRO" id="PR:Q9SD07"/>
<dbReference type="Proteomes" id="UP000006548">
    <property type="component" value="Chromosome 3"/>
</dbReference>
<dbReference type="ExpressionAtlas" id="Q9SD07">
    <property type="expression patterns" value="baseline and differential"/>
</dbReference>
<dbReference type="GO" id="GO:0005829">
    <property type="term" value="C:cytosol"/>
    <property type="evidence" value="ECO:0007005"/>
    <property type="project" value="TAIR"/>
</dbReference>
<dbReference type="GO" id="GO:0005773">
    <property type="term" value="C:vacuole"/>
    <property type="evidence" value="ECO:0007669"/>
    <property type="project" value="UniProtKB-SubCell"/>
</dbReference>
<dbReference type="GO" id="GO:0009753">
    <property type="term" value="P:response to jasmonic acid"/>
    <property type="evidence" value="ECO:0000270"/>
    <property type="project" value="UniProtKB"/>
</dbReference>
<dbReference type="GO" id="GO:0009611">
    <property type="term" value="P:response to wounding"/>
    <property type="evidence" value="ECO:0000270"/>
    <property type="project" value="UniProtKB"/>
</dbReference>
<dbReference type="FunFam" id="2.120.10.30:FF:000073">
    <property type="entry name" value="Protein STRICTOSIDINE SYNTHASE-LIKE 6"/>
    <property type="match status" value="1"/>
</dbReference>
<dbReference type="Gene3D" id="2.120.10.30">
    <property type="entry name" value="TolB, C-terminal domain"/>
    <property type="match status" value="1"/>
</dbReference>
<dbReference type="InterPro" id="IPR011042">
    <property type="entry name" value="6-blade_b-propeller_TolB-like"/>
</dbReference>
<dbReference type="InterPro" id="IPR018119">
    <property type="entry name" value="Strictosidine_synth_cons-reg"/>
</dbReference>
<dbReference type="PANTHER" id="PTHR10426:SF88">
    <property type="entry name" value="ADIPOCYTE PLASMA MEMBRANE-ASSOCIATED PROTEIN HEMOMUCIN-RELATED"/>
    <property type="match status" value="1"/>
</dbReference>
<dbReference type="PANTHER" id="PTHR10426">
    <property type="entry name" value="STRICTOSIDINE SYNTHASE-RELATED"/>
    <property type="match status" value="1"/>
</dbReference>
<dbReference type="Pfam" id="PF20067">
    <property type="entry name" value="SSL_N"/>
    <property type="match status" value="1"/>
</dbReference>
<dbReference type="Pfam" id="PF03088">
    <property type="entry name" value="Str_synth"/>
    <property type="match status" value="1"/>
</dbReference>
<dbReference type="SUPFAM" id="SSF63829">
    <property type="entry name" value="Calcium-dependent phosphotriesterase"/>
    <property type="match status" value="1"/>
</dbReference>
<sequence>MVLFFSTRFLFFSIFFPCLISITLYQLDSFEPASLPADSLITSPTSIPPLLNDRFLTGAEFIGVGLLNNPEDIAYHKDSNLIYTGCVDGWVKRVSVHDSANDSIVEDWVNTGGRPLGIAFGLHGEVIVADANKGLLSISDGGKKTELLTDEADGVRFKLTDAVTVADNGVLYFTDASSKYDFYQFIFDFLEGKPHGRVMSFDPTTRATRVLLKDLYFANGISMSPDQTHFVFCETIMRRCSKYYISEERVEVFIQGLPGYPDNIRYDGDGHYWIALISEVTTSWKLSMKYLFLRKLIYMAAKYGVELLSIKNAAVLQVDLDGNPIAMYHDHPFSHITSGVKIGNHLYFGSLLHSYITRLDLLKYPAQKKL</sequence>
<feature type="signal peptide" evidence="2">
    <location>
        <begin position="1"/>
        <end position="21"/>
    </location>
</feature>
<feature type="chain" id="PRO_0000431592" description="Protein STRICTOSIDINE SYNTHASE-LIKE 4" evidence="2">
    <location>
        <begin position="22"/>
        <end position="370"/>
    </location>
</feature>
<feature type="modified residue" description="Phosphotyrosine" evidence="10">
    <location>
        <position position="303"/>
    </location>
</feature>
<feature type="glycosylation site" description="N-linked (GlcNAc...) asparagine" evidence="3">
    <location>
        <position position="101"/>
    </location>
</feature>
<evidence type="ECO:0000250" key="1"/>
<evidence type="ECO:0000255" key="2"/>
<evidence type="ECO:0000255" key="3">
    <source>
        <dbReference type="PROSITE-ProRule" id="PRU00498"/>
    </source>
</evidence>
<evidence type="ECO:0000269" key="4">
    <source>
    </source>
</evidence>
<evidence type="ECO:0000303" key="5">
    <source>
    </source>
</evidence>
<evidence type="ECO:0000305" key="6"/>
<evidence type="ECO:0000312" key="7">
    <source>
        <dbReference type="Araport" id="AT3G51420"/>
    </source>
</evidence>
<evidence type="ECO:0000312" key="8">
    <source>
        <dbReference type="EMBL" id="CAB63006.1"/>
    </source>
</evidence>
<evidence type="ECO:0000312" key="9">
    <source>
        <dbReference type="Proteomes" id="UP000006548"/>
    </source>
</evidence>
<evidence type="ECO:0007744" key="10">
    <source>
    </source>
</evidence>
<accession>Q9SD07</accession>
<protein>
    <recommendedName>
        <fullName evidence="5">Protein STRICTOSIDINE SYNTHASE-LIKE 4</fullName>
        <shortName evidence="5">AtSSL4</shortName>
    </recommendedName>
</protein>
<keyword id="KW-0325">Glycoprotein</keyword>
<keyword id="KW-0597">Phosphoprotein</keyword>
<keyword id="KW-1185">Reference proteome</keyword>
<keyword id="KW-0732">Signal</keyword>
<keyword id="KW-0926">Vacuole</keyword>